<organism>
    <name type="scientific">Bartonella henselae (strain ATCC 49882 / DSM 28221 / CCUG 30454 / Houston 1)</name>
    <name type="common">Rochalimaea henselae</name>
    <dbReference type="NCBI Taxonomy" id="283166"/>
    <lineage>
        <taxon>Bacteria</taxon>
        <taxon>Pseudomonadati</taxon>
        <taxon>Pseudomonadota</taxon>
        <taxon>Alphaproteobacteria</taxon>
        <taxon>Hyphomicrobiales</taxon>
        <taxon>Bartonellaceae</taxon>
        <taxon>Bartonella</taxon>
    </lineage>
</organism>
<keyword id="KW-0963">Cytoplasm</keyword>
<keyword id="KW-0255">Endonuclease</keyword>
<keyword id="KW-0378">Hydrolase</keyword>
<keyword id="KW-0460">Magnesium</keyword>
<keyword id="KW-0479">Metal-binding</keyword>
<keyword id="KW-0507">mRNA processing</keyword>
<keyword id="KW-0540">Nuclease</keyword>
<keyword id="KW-0694">RNA-binding</keyword>
<keyword id="KW-0698">rRNA processing</keyword>
<keyword id="KW-0699">rRNA-binding</keyword>
<keyword id="KW-0819">tRNA processing</keyword>
<dbReference type="EC" id="3.1.26.3" evidence="1"/>
<dbReference type="EMBL" id="BX897699">
    <property type="protein sequence ID" value="CAF27317.1"/>
    <property type="molecule type" value="Genomic_DNA"/>
</dbReference>
<dbReference type="RefSeq" id="WP_034447401.1">
    <property type="nucleotide sequence ID" value="NZ_LRIJ02000001.1"/>
</dbReference>
<dbReference type="SMR" id="Q6G459"/>
<dbReference type="PaxDb" id="283166-BH05090"/>
<dbReference type="EnsemblBacteria" id="CAF27317">
    <property type="protein sequence ID" value="CAF27317"/>
    <property type="gene ID" value="BH05090"/>
</dbReference>
<dbReference type="GeneID" id="92985166"/>
<dbReference type="KEGG" id="bhe:BH05090"/>
<dbReference type="eggNOG" id="COG0571">
    <property type="taxonomic scope" value="Bacteria"/>
</dbReference>
<dbReference type="OrthoDB" id="9805026at2"/>
<dbReference type="Proteomes" id="UP000000421">
    <property type="component" value="Chromosome"/>
</dbReference>
<dbReference type="GO" id="GO:0005737">
    <property type="term" value="C:cytoplasm"/>
    <property type="evidence" value="ECO:0007669"/>
    <property type="project" value="UniProtKB-SubCell"/>
</dbReference>
<dbReference type="GO" id="GO:0003725">
    <property type="term" value="F:double-stranded RNA binding"/>
    <property type="evidence" value="ECO:0007669"/>
    <property type="project" value="TreeGrafter"/>
</dbReference>
<dbReference type="GO" id="GO:0046872">
    <property type="term" value="F:metal ion binding"/>
    <property type="evidence" value="ECO:0007669"/>
    <property type="project" value="UniProtKB-KW"/>
</dbReference>
<dbReference type="GO" id="GO:0004525">
    <property type="term" value="F:ribonuclease III activity"/>
    <property type="evidence" value="ECO:0007669"/>
    <property type="project" value="UniProtKB-UniRule"/>
</dbReference>
<dbReference type="GO" id="GO:0019843">
    <property type="term" value="F:rRNA binding"/>
    <property type="evidence" value="ECO:0007669"/>
    <property type="project" value="UniProtKB-KW"/>
</dbReference>
<dbReference type="GO" id="GO:0006397">
    <property type="term" value="P:mRNA processing"/>
    <property type="evidence" value="ECO:0007669"/>
    <property type="project" value="UniProtKB-UniRule"/>
</dbReference>
<dbReference type="GO" id="GO:0010468">
    <property type="term" value="P:regulation of gene expression"/>
    <property type="evidence" value="ECO:0007669"/>
    <property type="project" value="TreeGrafter"/>
</dbReference>
<dbReference type="GO" id="GO:0006364">
    <property type="term" value="P:rRNA processing"/>
    <property type="evidence" value="ECO:0007669"/>
    <property type="project" value="UniProtKB-UniRule"/>
</dbReference>
<dbReference type="GO" id="GO:0008033">
    <property type="term" value="P:tRNA processing"/>
    <property type="evidence" value="ECO:0007669"/>
    <property type="project" value="UniProtKB-KW"/>
</dbReference>
<dbReference type="CDD" id="cd10845">
    <property type="entry name" value="DSRM_RNAse_III_family"/>
    <property type="match status" value="1"/>
</dbReference>
<dbReference type="CDD" id="cd00593">
    <property type="entry name" value="RIBOc"/>
    <property type="match status" value="1"/>
</dbReference>
<dbReference type="FunFam" id="1.10.1520.10:FF:000001">
    <property type="entry name" value="Ribonuclease 3"/>
    <property type="match status" value="1"/>
</dbReference>
<dbReference type="Gene3D" id="3.30.160.20">
    <property type="match status" value="1"/>
</dbReference>
<dbReference type="Gene3D" id="1.10.1520.10">
    <property type="entry name" value="Ribonuclease III domain"/>
    <property type="match status" value="1"/>
</dbReference>
<dbReference type="HAMAP" id="MF_00104">
    <property type="entry name" value="RNase_III"/>
    <property type="match status" value="1"/>
</dbReference>
<dbReference type="InterPro" id="IPR014720">
    <property type="entry name" value="dsRBD_dom"/>
</dbReference>
<dbReference type="InterPro" id="IPR011907">
    <property type="entry name" value="RNase_III"/>
</dbReference>
<dbReference type="InterPro" id="IPR000999">
    <property type="entry name" value="RNase_III_dom"/>
</dbReference>
<dbReference type="InterPro" id="IPR036389">
    <property type="entry name" value="RNase_III_sf"/>
</dbReference>
<dbReference type="NCBIfam" id="TIGR02191">
    <property type="entry name" value="RNaseIII"/>
    <property type="match status" value="1"/>
</dbReference>
<dbReference type="PANTHER" id="PTHR11207:SF0">
    <property type="entry name" value="RIBONUCLEASE 3"/>
    <property type="match status" value="1"/>
</dbReference>
<dbReference type="PANTHER" id="PTHR11207">
    <property type="entry name" value="RIBONUCLEASE III"/>
    <property type="match status" value="1"/>
</dbReference>
<dbReference type="Pfam" id="PF00035">
    <property type="entry name" value="dsrm"/>
    <property type="match status" value="1"/>
</dbReference>
<dbReference type="Pfam" id="PF14622">
    <property type="entry name" value="Ribonucleas_3_3"/>
    <property type="match status" value="1"/>
</dbReference>
<dbReference type="SMART" id="SM00358">
    <property type="entry name" value="DSRM"/>
    <property type="match status" value="1"/>
</dbReference>
<dbReference type="SMART" id="SM00535">
    <property type="entry name" value="RIBOc"/>
    <property type="match status" value="1"/>
</dbReference>
<dbReference type="SUPFAM" id="SSF54768">
    <property type="entry name" value="dsRNA-binding domain-like"/>
    <property type="match status" value="1"/>
</dbReference>
<dbReference type="SUPFAM" id="SSF69065">
    <property type="entry name" value="RNase III domain-like"/>
    <property type="match status" value="1"/>
</dbReference>
<dbReference type="PROSITE" id="PS50137">
    <property type="entry name" value="DS_RBD"/>
    <property type="match status" value="1"/>
</dbReference>
<dbReference type="PROSITE" id="PS00517">
    <property type="entry name" value="RNASE_3_1"/>
    <property type="match status" value="1"/>
</dbReference>
<dbReference type="PROSITE" id="PS50142">
    <property type="entry name" value="RNASE_3_2"/>
    <property type="match status" value="1"/>
</dbReference>
<accession>Q6G459</accession>
<evidence type="ECO:0000255" key="1">
    <source>
        <dbReference type="HAMAP-Rule" id="MF_00104"/>
    </source>
</evidence>
<protein>
    <recommendedName>
        <fullName evidence="1">Ribonuclease 3</fullName>
        <ecNumber evidence="1">3.1.26.3</ecNumber>
    </recommendedName>
    <alternativeName>
        <fullName evidence="1">Ribonuclease III</fullName>
        <shortName evidence="1">RNase III</shortName>
    </alternativeName>
</protein>
<comment type="function">
    <text evidence="1">Digests double-stranded RNA. Involved in the processing of primary rRNA transcript to yield the immediate precursors to the large and small rRNAs (23S and 16S). Processes some mRNAs, and tRNAs when they are encoded in the rRNA operon. Processes pre-crRNA and tracrRNA of type II CRISPR loci if present in the organism.</text>
</comment>
<comment type="catalytic activity">
    <reaction evidence="1">
        <text>Endonucleolytic cleavage to 5'-phosphomonoester.</text>
        <dbReference type="EC" id="3.1.26.3"/>
    </reaction>
</comment>
<comment type="cofactor">
    <cofactor evidence="1">
        <name>Mg(2+)</name>
        <dbReference type="ChEBI" id="CHEBI:18420"/>
    </cofactor>
</comment>
<comment type="subunit">
    <text evidence="1">Homodimer.</text>
</comment>
<comment type="subcellular location">
    <subcellularLocation>
        <location evidence="1">Cytoplasm</location>
    </subcellularLocation>
</comment>
<comment type="similarity">
    <text evidence="1">Belongs to the ribonuclease III family.</text>
</comment>
<sequence>MKLPMIDQLEKLTGHYFKDKKKLKKALTHSSVQGSEQGNYERLEFLGDRVLGLLIAEMLYQLFPQASEGELSVRLNSLVNAQTCADIALEMELPVMIHVGFEMKNLKGRRLTNMYADVIEALIAVIYLDGGLESVRPFIQRYWQSRAKQMDAGRRDAKTQLQEWAHVQGGVQPHYRVVKRSGPDHDPVFMVEVSIPGFASEIGQGNSKRCAERMAAEKILRREGIWETMEKNNHE</sequence>
<gene>
    <name evidence="1" type="primary">rnc</name>
    <name type="ordered locus">BH05090</name>
</gene>
<name>RNC_BARHE</name>
<reference key="1">
    <citation type="journal article" date="2004" name="Proc. Natl. Acad. Sci. U.S.A.">
        <title>The louse-borne human pathogen Bartonella quintana is a genomic derivative of the zoonotic agent Bartonella henselae.</title>
        <authorList>
            <person name="Alsmark U.C.M."/>
            <person name="Frank A.C."/>
            <person name="Karlberg E.O."/>
            <person name="Legault B.-A."/>
            <person name="Ardell D.H."/>
            <person name="Canbaeck B."/>
            <person name="Eriksson A.-S."/>
            <person name="Naeslund A.K."/>
            <person name="Handley S.A."/>
            <person name="Huvet M."/>
            <person name="La Scola B."/>
            <person name="Holmberg M."/>
            <person name="Andersson S.G.E."/>
        </authorList>
    </citation>
    <scope>NUCLEOTIDE SEQUENCE [LARGE SCALE GENOMIC DNA]</scope>
    <source>
        <strain>ATCC 49882 / DSM 28221 / CCUG 30454 / Houston 1</strain>
    </source>
</reference>
<feature type="chain" id="PRO_0000228499" description="Ribonuclease 3">
    <location>
        <begin position="1"/>
        <end position="235"/>
    </location>
</feature>
<feature type="domain" description="RNase III" evidence="1">
    <location>
        <begin position="6"/>
        <end position="131"/>
    </location>
</feature>
<feature type="domain" description="DRBM" evidence="1">
    <location>
        <begin position="156"/>
        <end position="225"/>
    </location>
</feature>
<feature type="active site" evidence="1">
    <location>
        <position position="48"/>
    </location>
</feature>
<feature type="active site" evidence="1">
    <location>
        <position position="120"/>
    </location>
</feature>
<feature type="binding site" evidence="1">
    <location>
        <position position="44"/>
    </location>
    <ligand>
        <name>Mg(2+)</name>
        <dbReference type="ChEBI" id="CHEBI:18420"/>
    </ligand>
</feature>
<feature type="binding site" evidence="1">
    <location>
        <position position="117"/>
    </location>
    <ligand>
        <name>Mg(2+)</name>
        <dbReference type="ChEBI" id="CHEBI:18420"/>
    </ligand>
</feature>
<feature type="binding site" evidence="1">
    <location>
        <position position="120"/>
    </location>
    <ligand>
        <name>Mg(2+)</name>
        <dbReference type="ChEBI" id="CHEBI:18420"/>
    </ligand>
</feature>
<proteinExistence type="inferred from homology"/>